<keyword id="KW-0145">Chemotaxis</keyword>
<keyword id="KW-0963">Cytoplasm</keyword>
<keyword id="KW-0378">Hydrolase</keyword>
<keyword id="KW-0597">Phosphoprotein</keyword>
<keyword id="KW-1185">Reference proteome</keyword>
<organism>
    <name type="scientific">Yersinia pestis</name>
    <dbReference type="NCBI Taxonomy" id="632"/>
    <lineage>
        <taxon>Bacteria</taxon>
        <taxon>Pseudomonadati</taxon>
        <taxon>Pseudomonadota</taxon>
        <taxon>Gammaproteobacteria</taxon>
        <taxon>Enterobacterales</taxon>
        <taxon>Yersiniaceae</taxon>
        <taxon>Yersinia</taxon>
    </lineage>
</organism>
<dbReference type="EC" id="3.1.1.61" evidence="1"/>
<dbReference type="EC" id="3.5.1.44" evidence="1"/>
<dbReference type="EMBL" id="AL590842">
    <property type="protein sequence ID" value="CAL20323.1"/>
    <property type="molecule type" value="Genomic_DNA"/>
</dbReference>
<dbReference type="EMBL" id="AE009952">
    <property type="protein sequence ID" value="AAM85407.1"/>
    <property type="status" value="ALT_INIT"/>
    <property type="molecule type" value="Genomic_DNA"/>
</dbReference>
<dbReference type="EMBL" id="AE017042">
    <property type="protein sequence ID" value="AAS62034.1"/>
    <property type="status" value="ALT_INIT"/>
    <property type="molecule type" value="Genomic_DNA"/>
</dbReference>
<dbReference type="PIR" id="AH0204">
    <property type="entry name" value="AH0204"/>
</dbReference>
<dbReference type="RefSeq" id="WP_002210874.1">
    <property type="nucleotide sequence ID" value="NZ_WUCM01000082.1"/>
</dbReference>
<dbReference type="RefSeq" id="YP_002346684.1">
    <property type="nucleotide sequence ID" value="NC_003143.1"/>
</dbReference>
<dbReference type="SMR" id="Q8ZFM0"/>
<dbReference type="IntAct" id="Q8ZFM0">
    <property type="interactions" value="2"/>
</dbReference>
<dbReference type="STRING" id="214092.YPO1679"/>
<dbReference type="PaxDb" id="214092-YPO1679"/>
<dbReference type="DNASU" id="1146787"/>
<dbReference type="EnsemblBacteria" id="AAS62034">
    <property type="protein sequence ID" value="AAS62034"/>
    <property type="gene ID" value="YP_1809"/>
</dbReference>
<dbReference type="KEGG" id="ype:YPO1679"/>
<dbReference type="KEGG" id="ypk:y1841"/>
<dbReference type="KEGG" id="ypm:YP_1809"/>
<dbReference type="PATRIC" id="fig|214092.21.peg.2024"/>
<dbReference type="eggNOG" id="COG2201">
    <property type="taxonomic scope" value="Bacteria"/>
</dbReference>
<dbReference type="HOGENOM" id="CLU_000445_51_0_6"/>
<dbReference type="OMA" id="MLEMHRA"/>
<dbReference type="OrthoDB" id="9793421at2"/>
<dbReference type="Proteomes" id="UP000000815">
    <property type="component" value="Chromosome"/>
</dbReference>
<dbReference type="Proteomes" id="UP000001019">
    <property type="component" value="Chromosome"/>
</dbReference>
<dbReference type="Proteomes" id="UP000002490">
    <property type="component" value="Chromosome"/>
</dbReference>
<dbReference type="GO" id="GO:0005737">
    <property type="term" value="C:cytoplasm"/>
    <property type="evidence" value="ECO:0007669"/>
    <property type="project" value="UniProtKB-SubCell"/>
</dbReference>
<dbReference type="GO" id="GO:0000156">
    <property type="term" value="F:phosphorelay response regulator activity"/>
    <property type="evidence" value="ECO:0007669"/>
    <property type="project" value="InterPro"/>
</dbReference>
<dbReference type="GO" id="GO:0008984">
    <property type="term" value="F:protein-glutamate methylesterase activity"/>
    <property type="evidence" value="ECO:0007669"/>
    <property type="project" value="UniProtKB-UniRule"/>
</dbReference>
<dbReference type="GO" id="GO:0050568">
    <property type="term" value="F:protein-glutamine glutaminase activity"/>
    <property type="evidence" value="ECO:0007669"/>
    <property type="project" value="UniProtKB-UniRule"/>
</dbReference>
<dbReference type="GO" id="GO:0006935">
    <property type="term" value="P:chemotaxis"/>
    <property type="evidence" value="ECO:0007669"/>
    <property type="project" value="UniProtKB-UniRule"/>
</dbReference>
<dbReference type="CDD" id="cd16432">
    <property type="entry name" value="CheB_Rec"/>
    <property type="match status" value="1"/>
</dbReference>
<dbReference type="CDD" id="cd17541">
    <property type="entry name" value="REC_CheB-like"/>
    <property type="match status" value="1"/>
</dbReference>
<dbReference type="FunFam" id="3.40.50.180:FF:000001">
    <property type="entry name" value="Protein-glutamate methylesterase/protein-glutamine glutaminase"/>
    <property type="match status" value="1"/>
</dbReference>
<dbReference type="FunFam" id="3.40.50.2300:FF:000060">
    <property type="entry name" value="Protein-glutamate methylesterase/protein-glutamine glutaminase"/>
    <property type="match status" value="1"/>
</dbReference>
<dbReference type="Gene3D" id="3.40.50.2300">
    <property type="match status" value="1"/>
</dbReference>
<dbReference type="Gene3D" id="3.40.50.180">
    <property type="entry name" value="Methylesterase CheB, C-terminal domain"/>
    <property type="match status" value="1"/>
</dbReference>
<dbReference type="HAMAP" id="MF_00099">
    <property type="entry name" value="CheB_chemtxs"/>
    <property type="match status" value="1"/>
</dbReference>
<dbReference type="InterPro" id="IPR008248">
    <property type="entry name" value="CheB-like"/>
</dbReference>
<dbReference type="InterPro" id="IPR035909">
    <property type="entry name" value="CheB_C"/>
</dbReference>
<dbReference type="InterPro" id="IPR011006">
    <property type="entry name" value="CheY-like_superfamily"/>
</dbReference>
<dbReference type="InterPro" id="IPR000673">
    <property type="entry name" value="Sig_transdc_resp-reg_Me-estase"/>
</dbReference>
<dbReference type="InterPro" id="IPR001789">
    <property type="entry name" value="Sig_transdc_resp-reg_receiver"/>
</dbReference>
<dbReference type="NCBIfam" id="NF001965">
    <property type="entry name" value="PRK00742.1"/>
    <property type="match status" value="1"/>
</dbReference>
<dbReference type="NCBIfam" id="NF009206">
    <property type="entry name" value="PRK12555.1"/>
    <property type="match status" value="1"/>
</dbReference>
<dbReference type="PANTHER" id="PTHR42872">
    <property type="entry name" value="PROTEIN-GLUTAMATE METHYLESTERASE/PROTEIN-GLUTAMINE GLUTAMINASE"/>
    <property type="match status" value="1"/>
</dbReference>
<dbReference type="PANTHER" id="PTHR42872:SF6">
    <property type="entry name" value="PROTEIN-GLUTAMATE METHYLESTERASE_PROTEIN-GLUTAMINE GLUTAMINASE"/>
    <property type="match status" value="1"/>
</dbReference>
<dbReference type="Pfam" id="PF01339">
    <property type="entry name" value="CheB_methylest"/>
    <property type="match status" value="1"/>
</dbReference>
<dbReference type="Pfam" id="PF00072">
    <property type="entry name" value="Response_reg"/>
    <property type="match status" value="1"/>
</dbReference>
<dbReference type="PIRSF" id="PIRSF000876">
    <property type="entry name" value="RR_chemtxs_CheB"/>
    <property type="match status" value="1"/>
</dbReference>
<dbReference type="SMART" id="SM00448">
    <property type="entry name" value="REC"/>
    <property type="match status" value="1"/>
</dbReference>
<dbReference type="SUPFAM" id="SSF52172">
    <property type="entry name" value="CheY-like"/>
    <property type="match status" value="1"/>
</dbReference>
<dbReference type="SUPFAM" id="SSF52738">
    <property type="entry name" value="Methylesterase CheB, C-terminal domain"/>
    <property type="match status" value="1"/>
</dbReference>
<dbReference type="PROSITE" id="PS50122">
    <property type="entry name" value="CHEB"/>
    <property type="match status" value="1"/>
</dbReference>
<dbReference type="PROSITE" id="PS50110">
    <property type="entry name" value="RESPONSE_REGULATORY"/>
    <property type="match status" value="1"/>
</dbReference>
<protein>
    <recommendedName>
        <fullName evidence="1">Protein-glutamate methylesterase/protein-glutamine glutaminase</fullName>
        <ecNumber evidence="1">3.1.1.61</ecNumber>
        <ecNumber evidence="1">3.5.1.44</ecNumber>
    </recommendedName>
</protein>
<sequence>MSKIRVLCVDDSALMRQLMTEIINSHPDMEMVAAAQDPLVARDLIKKFNPQVLTLDVEMPRMDGLDFLEKLMRLRPMPVVMVSSLTGKNSEITMRALELGAIDFVTKPQLGIREGMLAYSELIADKIRTAAKARLPQRVLENKPAMLSHTPLLSSEKLIAIGASTGGTEAIRAVLQPLPPTSPALLITQHMPPGFTRSFAERLNKLCQITVKEAEDGERVLPGHAYIAPGDRHLELARSGANYQVRIHDGPAVNRHRPSVDVLFRSVAQYAGRNAVGVILTGMGNDGAAGLLEMHRAGAYTLAQNEASCVVFGMPREAIAMGGVNDVVELNQISQRMLAQISSGQALRI</sequence>
<name>CHEB_YERPE</name>
<proteinExistence type="inferred from homology"/>
<feature type="chain" id="PRO_0000158047" description="Protein-glutamate methylesterase/protein-glutamine glutaminase">
    <location>
        <begin position="1"/>
        <end position="349"/>
    </location>
</feature>
<feature type="domain" description="Response regulatory" evidence="1">
    <location>
        <begin position="5"/>
        <end position="122"/>
    </location>
</feature>
<feature type="domain" description="CheB-type methylesterase" evidence="1">
    <location>
        <begin position="152"/>
        <end position="344"/>
    </location>
</feature>
<feature type="active site" evidence="1">
    <location>
        <position position="164"/>
    </location>
</feature>
<feature type="active site" evidence="1">
    <location>
        <position position="190"/>
    </location>
</feature>
<feature type="active site" evidence="1">
    <location>
        <position position="286"/>
    </location>
</feature>
<feature type="modified residue" description="4-aspartylphosphate" evidence="1">
    <location>
        <position position="56"/>
    </location>
</feature>
<reference key="1">
    <citation type="journal article" date="2001" name="Nature">
        <title>Genome sequence of Yersinia pestis, the causative agent of plague.</title>
        <authorList>
            <person name="Parkhill J."/>
            <person name="Wren B.W."/>
            <person name="Thomson N.R."/>
            <person name="Titball R.W."/>
            <person name="Holden M.T.G."/>
            <person name="Prentice M.B."/>
            <person name="Sebaihia M."/>
            <person name="James K.D."/>
            <person name="Churcher C.M."/>
            <person name="Mungall K.L."/>
            <person name="Baker S."/>
            <person name="Basham D."/>
            <person name="Bentley S.D."/>
            <person name="Brooks K."/>
            <person name="Cerdeno-Tarraga A.-M."/>
            <person name="Chillingworth T."/>
            <person name="Cronin A."/>
            <person name="Davies R.M."/>
            <person name="Davis P."/>
            <person name="Dougan G."/>
            <person name="Feltwell T."/>
            <person name="Hamlin N."/>
            <person name="Holroyd S."/>
            <person name="Jagels K."/>
            <person name="Karlyshev A.V."/>
            <person name="Leather S."/>
            <person name="Moule S."/>
            <person name="Oyston P.C.F."/>
            <person name="Quail M.A."/>
            <person name="Rutherford K.M."/>
            <person name="Simmonds M."/>
            <person name="Skelton J."/>
            <person name="Stevens K."/>
            <person name="Whitehead S."/>
            <person name="Barrell B.G."/>
        </authorList>
    </citation>
    <scope>NUCLEOTIDE SEQUENCE [LARGE SCALE GENOMIC DNA]</scope>
    <source>
        <strain>CO-92 / Biovar Orientalis</strain>
    </source>
</reference>
<reference key="2">
    <citation type="journal article" date="2002" name="J. Bacteriol.">
        <title>Genome sequence of Yersinia pestis KIM.</title>
        <authorList>
            <person name="Deng W."/>
            <person name="Burland V."/>
            <person name="Plunkett G. III"/>
            <person name="Boutin A."/>
            <person name="Mayhew G.F."/>
            <person name="Liss P."/>
            <person name="Perna N.T."/>
            <person name="Rose D.J."/>
            <person name="Mau B."/>
            <person name="Zhou S."/>
            <person name="Schwartz D.C."/>
            <person name="Fetherston J.D."/>
            <person name="Lindler L.E."/>
            <person name="Brubaker R.R."/>
            <person name="Plano G.V."/>
            <person name="Straley S.C."/>
            <person name="McDonough K.A."/>
            <person name="Nilles M.L."/>
            <person name="Matson J.S."/>
            <person name="Blattner F.R."/>
            <person name="Perry R.D."/>
        </authorList>
    </citation>
    <scope>NUCLEOTIDE SEQUENCE [LARGE SCALE GENOMIC DNA]</scope>
    <source>
        <strain>KIM10+ / Biovar Mediaevalis</strain>
    </source>
</reference>
<reference key="3">
    <citation type="journal article" date="2004" name="DNA Res.">
        <title>Complete genome sequence of Yersinia pestis strain 91001, an isolate avirulent to humans.</title>
        <authorList>
            <person name="Song Y."/>
            <person name="Tong Z."/>
            <person name="Wang J."/>
            <person name="Wang L."/>
            <person name="Guo Z."/>
            <person name="Han Y."/>
            <person name="Zhang J."/>
            <person name="Pei D."/>
            <person name="Zhou D."/>
            <person name="Qin H."/>
            <person name="Pang X."/>
            <person name="Han Y."/>
            <person name="Zhai J."/>
            <person name="Li M."/>
            <person name="Cui B."/>
            <person name="Qi Z."/>
            <person name="Jin L."/>
            <person name="Dai R."/>
            <person name="Chen F."/>
            <person name="Li S."/>
            <person name="Ye C."/>
            <person name="Du Z."/>
            <person name="Lin W."/>
            <person name="Wang J."/>
            <person name="Yu J."/>
            <person name="Yang H."/>
            <person name="Wang J."/>
            <person name="Huang P."/>
            <person name="Yang R."/>
        </authorList>
    </citation>
    <scope>NUCLEOTIDE SEQUENCE [LARGE SCALE GENOMIC DNA]</scope>
    <source>
        <strain>91001 / Biovar Mediaevalis</strain>
    </source>
</reference>
<gene>
    <name evidence="1" type="primary">cheB</name>
    <name type="ordered locus">YPO1679</name>
    <name type="ordered locus">y1841</name>
    <name type="ordered locus">YP_1809</name>
</gene>
<accession>Q8ZFM0</accession>
<accession>Q0WGA4</accession>
<accession>Q8D0P2</accession>
<evidence type="ECO:0000255" key="1">
    <source>
        <dbReference type="HAMAP-Rule" id="MF_00099"/>
    </source>
</evidence>
<evidence type="ECO:0000305" key="2"/>
<comment type="function">
    <text evidence="1">Involved in chemotaxis. Part of a chemotaxis signal transduction system that modulates chemotaxis in response to various stimuli. Catalyzes the demethylation of specific methylglutamate residues introduced into the chemoreceptors (methyl-accepting chemotaxis proteins or MCP) by CheR. Also mediates the irreversible deamidation of specific glutamine residues to glutamic acid.</text>
</comment>
<comment type="catalytic activity">
    <reaction evidence="1">
        <text>[protein]-L-glutamate 5-O-methyl ester + H2O = L-glutamyl-[protein] + methanol + H(+)</text>
        <dbReference type="Rhea" id="RHEA:23236"/>
        <dbReference type="Rhea" id="RHEA-COMP:10208"/>
        <dbReference type="Rhea" id="RHEA-COMP:10311"/>
        <dbReference type="ChEBI" id="CHEBI:15377"/>
        <dbReference type="ChEBI" id="CHEBI:15378"/>
        <dbReference type="ChEBI" id="CHEBI:17790"/>
        <dbReference type="ChEBI" id="CHEBI:29973"/>
        <dbReference type="ChEBI" id="CHEBI:82795"/>
        <dbReference type="EC" id="3.1.1.61"/>
    </reaction>
</comment>
<comment type="catalytic activity">
    <reaction evidence="1">
        <text>L-glutaminyl-[protein] + H2O = L-glutamyl-[protein] + NH4(+)</text>
        <dbReference type="Rhea" id="RHEA:16441"/>
        <dbReference type="Rhea" id="RHEA-COMP:10207"/>
        <dbReference type="Rhea" id="RHEA-COMP:10208"/>
        <dbReference type="ChEBI" id="CHEBI:15377"/>
        <dbReference type="ChEBI" id="CHEBI:28938"/>
        <dbReference type="ChEBI" id="CHEBI:29973"/>
        <dbReference type="ChEBI" id="CHEBI:30011"/>
        <dbReference type="EC" id="3.5.1.44"/>
    </reaction>
</comment>
<comment type="subcellular location">
    <subcellularLocation>
        <location evidence="1">Cytoplasm</location>
    </subcellularLocation>
</comment>
<comment type="domain">
    <text evidence="1">Contains a C-terminal catalytic domain, and an N-terminal region which modulates catalytic activity.</text>
</comment>
<comment type="PTM">
    <text evidence="1">Phosphorylated by CheA. Phosphorylation of the N-terminal regulatory domain activates the methylesterase activity.</text>
</comment>
<comment type="similarity">
    <text evidence="1">Belongs to the CheB family.</text>
</comment>
<comment type="sequence caution" evidence="2">
    <conflict type="erroneous initiation">
        <sequence resource="EMBL-CDS" id="AAM85407"/>
    </conflict>
</comment>
<comment type="sequence caution" evidence="2">
    <conflict type="erroneous initiation">
        <sequence resource="EMBL-CDS" id="AAS62034"/>
    </conflict>
</comment>